<reference key="1">
    <citation type="journal article" date="2001" name="J. Biol. Chem.">
        <title>Lysyl oxidase-like protein from bovine aorta. Isolation and maturation to an active form by bone morphogenetic protein-1.</title>
        <authorList>
            <person name="Borel A."/>
            <person name="Eichenberger D."/>
            <person name="Farjanel J."/>
            <person name="Kessler E."/>
            <person name="Gleyzal C."/>
            <person name="Hulmes D.J.S."/>
            <person name="Sommer P."/>
            <person name="Font B."/>
        </authorList>
    </citation>
    <scope>NUCLEOTIDE SEQUENCE [MRNA]</scope>
    <source>
        <tissue>Skin</tissue>
    </source>
</reference>
<reference key="2">
    <citation type="journal article" date="1990" name="Biochemistry">
        <title>Cloning of rat aorta lysyl oxidase cDNA: complete codons and predicted amino acid sequence.</title>
        <authorList>
            <person name="Trackman P.C."/>
            <person name="Pratt A.M."/>
            <person name="Wolanski A."/>
            <person name="Tang S.-S."/>
            <person name="Offner G.D."/>
            <person name="Troxler R.F."/>
            <person name="Kagan H.M."/>
        </authorList>
    </citation>
    <scope>PROTEIN SEQUENCE OF 200-231; 266-284; 297-305; 316-323; 354-359; 379-398 AND 403-418</scope>
    <source>
        <tissue>Aorta</tissue>
    </source>
</reference>
<reference key="3">
    <citation type="journal article" date="1996" name="Science">
        <title>A crosslinked cofactor in lysyl oxidase: redox function for amino acid side chains.</title>
        <authorList>
            <person name="Wang S.X."/>
            <person name="Mure M."/>
            <person name="Medzihradszky K.F."/>
            <person name="Burlingame A.L."/>
            <person name="Brown D.E."/>
            <person name="Dooley D.M."/>
            <person name="Smith A.J."/>
            <person name="Kagan H.M."/>
            <person name="Klinman J.P."/>
        </authorList>
    </citation>
    <scope>COFACTOR</scope>
    <scope>TOPAQUINONE AT TYR-356</scope>
    <scope>CROSS-LINK 321-LYS-TYR-356</scope>
</reference>
<reference key="4">
    <citation type="journal article" date="2011" name="J. Neural Transm.">
        <title>Identification of the disulfide bonds of lysyl oxidase.</title>
        <authorList>
            <person name="Chen X."/>
            <person name="Greenaway F.T."/>
        </authorList>
    </citation>
    <scope>DISULFIDE BONDS</scope>
</reference>
<reference key="5">
    <citation type="journal article" date="2019" name="J. Biol. Chem.">
        <title>Differential cleavage of lysyl oxidase by the metalloproteinases BMP1 and ADAMTS2/14 regulates collagen binding through a tyrosine sulfate domain.</title>
        <authorList>
            <person name="Rosell-Garcia T."/>
            <person name="Paradela A."/>
            <person name="Bravo G."/>
            <person name="Dupont L."/>
            <person name="Bekhouche M."/>
            <person name="Colige A."/>
            <person name="Rodriguez-Pascual F."/>
        </authorList>
    </citation>
    <scope>SUBCELLULAR LOCATION</scope>
</reference>
<accession>P33072</accession>
<accession>Q95L38</accession>
<organism>
    <name type="scientific">Bos taurus</name>
    <name type="common">Bovine</name>
    <dbReference type="NCBI Taxonomy" id="9913"/>
    <lineage>
        <taxon>Eukaryota</taxon>
        <taxon>Metazoa</taxon>
        <taxon>Chordata</taxon>
        <taxon>Craniata</taxon>
        <taxon>Vertebrata</taxon>
        <taxon>Euteleostomi</taxon>
        <taxon>Mammalia</taxon>
        <taxon>Eutheria</taxon>
        <taxon>Laurasiatheria</taxon>
        <taxon>Artiodactyla</taxon>
        <taxon>Ruminantia</taxon>
        <taxon>Pecora</taxon>
        <taxon>Bovidae</taxon>
        <taxon>Bovinae</taxon>
        <taxon>Bos</taxon>
    </lineage>
</organism>
<comment type="function">
    <text evidence="4">Responsible for the post-translational oxidative deamination of peptidyl lysine residues in precursors to fibrous collagen and elastin. Regulator of Ras expression. May play a role in tumor suppression. Plays a role in the aortic wall architecture (By similarity).</text>
</comment>
<comment type="catalytic activity">
    <reaction evidence="4">
        <text>L-lysyl-[protein] + O2 + H2O = (S)-2-amino-6-oxohexanoyl-[protein] + H2O2 + NH4(+)</text>
        <dbReference type="Rhea" id="RHEA:24544"/>
        <dbReference type="Rhea" id="RHEA-COMP:9752"/>
        <dbReference type="Rhea" id="RHEA-COMP:12448"/>
        <dbReference type="ChEBI" id="CHEBI:15377"/>
        <dbReference type="ChEBI" id="CHEBI:15379"/>
        <dbReference type="ChEBI" id="CHEBI:16240"/>
        <dbReference type="ChEBI" id="CHEBI:28938"/>
        <dbReference type="ChEBI" id="CHEBI:29969"/>
        <dbReference type="ChEBI" id="CHEBI:131803"/>
        <dbReference type="EC" id="1.4.3.13"/>
    </reaction>
</comment>
<comment type="cofactor">
    <cofactor evidence="2">
        <name>Cu cation</name>
        <dbReference type="ChEBI" id="CHEBI:23378"/>
    </cofactor>
</comment>
<comment type="cofactor">
    <cofactor evidence="9">
        <name>lysine tyrosylquinone residue</name>
        <dbReference type="ChEBI" id="CHEBI:20489"/>
    </cofactor>
    <text evidence="9">Contains 1 lysine tyrosylquinone.</text>
</comment>
<comment type="subunit">
    <text evidence="3">Interacts with MFAP4. Interacts (via propeptide) with EFEMP2; this interaction is strong and facilitates formation of ternary complexes with ELN during elastic fiber assembly; this interaction limits interaction of EFEMP2 with FBLN5.</text>
</comment>
<comment type="subcellular location">
    <subcellularLocation>
        <location evidence="8">Secreted</location>
    </subcellularLocation>
    <subcellularLocation>
        <location>Secreted</location>
        <location>Extracellular space</location>
    </subcellularLocation>
</comment>
<comment type="PTM">
    <text evidence="9">The lysine tyrosylquinone cross-link (LTQ) is generated by condensation of the epsilon-amino group of a lysine with a topaquinone produced by oxidation of tyrosine.</text>
</comment>
<comment type="PTM">
    <text evidence="3 4">Proteolytically cleaved by BMP1 which removes the propeptide (By similarity). Also proteolytically cleaved by ADAMTS2 and ADAMTS14, but not by ADAMTS3, at an additional cleavage site downstream of the BMP1 cleavage site (By similarity). The propeptide plays a role in directing the deposition of this enzyme to elastic fibers, via interaction with tropoelastin (By similarity). Cleavage by BMP1 to remove the propeptide does not increase enzymatic activity but increases binding to collagen (By similarity). Cleavage by ADAMTS2 produces a form with reduced collagen-binding activity (By similarity).</text>
</comment>
<comment type="PTM">
    <text evidence="3">Sulfated at Tyr-188 and also at either Tyr-184 or Tyr-185 which enhances binding to collagen.</text>
</comment>
<comment type="miscellaneous">
    <text evidence="1">The propeptide plays a role in directing the deposition of this enzyme to elastic fibers, via interaction with tropoelastin.</text>
</comment>
<comment type="similarity">
    <text evidence="10">Belongs to the lysyl oxidase family.</text>
</comment>
<protein>
    <recommendedName>
        <fullName evidence="3">Protein-lysine 6-oxidase</fullName>
        <ecNumber evidence="3">1.4.3.13</ecNumber>
    </recommendedName>
    <alternativeName>
        <fullName>Lysyl oxidase</fullName>
    </alternativeName>
    <component>
        <recommendedName>
            <fullName evidence="3">Protein-lysine 6-oxidase, long form</fullName>
        </recommendedName>
    </component>
    <component>
        <recommendedName>
            <fullName evidence="3">Protein-lysine 6-oxidase, short form</fullName>
        </recommendedName>
    </component>
</protein>
<name>LYOX_BOVIN</name>
<gene>
    <name evidence="3" type="primary">LOX</name>
</gene>
<sequence length="418" mass="47115">MRFAWTALLGSLQLCALVRCAPPAASHRQPPREQAAAPGAWRQKIQWENNGQVFSLLSLGSQYQPQRRRDPGATAPGAANATAPQMRTPILLLRNNRTAAARVRTAGPSAAAAGRPRPAARHWFQAGYSTSGAHDAGTSRADNQTAPGEVPTLSNLRPPNRVEVDGMVGDDPYNPYKYTDDNPYYNYYDTYERPRPGSRYRPGYGTGYFQYGLPDLVPDPYYIQASTYVQKMAMYNLRCAAEENCLASSAYRXDVRDYDHRVLLRFPQRVKNQGTSDFLPSRPRYSWEWHSCHQHYHSMDEFSHYDLLDASTQRRVAEGHKASFCLEDTSCDYGYHRRFACTAHTQGLSPGCYDTYNADIDCQWIDITDVKPGNYILKVSVNPSYLVPESDYSNNVVRCEIRYTGHHAYASGCTISPY</sequence>
<dbReference type="EC" id="1.4.3.13" evidence="3"/>
<dbReference type="EMBL" id="AF421186">
    <property type="protein sequence ID" value="AAL13313.1"/>
    <property type="molecule type" value="mRNA"/>
</dbReference>
<dbReference type="PIR" id="B30352">
    <property type="entry name" value="B30352"/>
</dbReference>
<dbReference type="FunCoup" id="P33072">
    <property type="interactions" value="319"/>
</dbReference>
<dbReference type="STRING" id="9913.ENSBTAP00000068980"/>
<dbReference type="BindingDB" id="P33072"/>
<dbReference type="ChEMBL" id="CHEMBL4523217"/>
<dbReference type="GlyCosmos" id="P33072">
    <property type="glycosylation" value="3 sites, No reported glycans"/>
</dbReference>
<dbReference type="GlyGen" id="P33072">
    <property type="glycosylation" value="3 sites"/>
</dbReference>
<dbReference type="PaxDb" id="9913-ENSBTAP00000017275"/>
<dbReference type="eggNOG" id="ENOG502QWQR">
    <property type="taxonomic scope" value="Eukaryota"/>
</dbReference>
<dbReference type="InParanoid" id="P33072"/>
<dbReference type="OrthoDB" id="547291at2759"/>
<dbReference type="Proteomes" id="UP000009136">
    <property type="component" value="Unplaced"/>
</dbReference>
<dbReference type="GO" id="GO:0062023">
    <property type="term" value="C:collagen-containing extracellular matrix"/>
    <property type="evidence" value="ECO:0000318"/>
    <property type="project" value="GO_Central"/>
</dbReference>
<dbReference type="GO" id="GO:0005576">
    <property type="term" value="C:extracellular region"/>
    <property type="evidence" value="ECO:0000250"/>
    <property type="project" value="UniProtKB"/>
</dbReference>
<dbReference type="GO" id="GO:0005615">
    <property type="term" value="C:extracellular space"/>
    <property type="evidence" value="ECO:0000250"/>
    <property type="project" value="UniProtKB"/>
</dbReference>
<dbReference type="GO" id="GO:0005518">
    <property type="term" value="F:collagen binding"/>
    <property type="evidence" value="ECO:0000250"/>
    <property type="project" value="UniProtKB"/>
</dbReference>
<dbReference type="GO" id="GO:0005507">
    <property type="term" value="F:copper ion binding"/>
    <property type="evidence" value="ECO:0007669"/>
    <property type="project" value="InterPro"/>
</dbReference>
<dbReference type="GO" id="GO:0004720">
    <property type="term" value="F:protein-lysine 6-oxidase activity"/>
    <property type="evidence" value="ECO:0000250"/>
    <property type="project" value="UniProtKB"/>
</dbReference>
<dbReference type="GO" id="GO:0048514">
    <property type="term" value="P:blood vessel morphogenesis"/>
    <property type="evidence" value="ECO:0000250"/>
    <property type="project" value="UniProtKB"/>
</dbReference>
<dbReference type="GO" id="GO:0030199">
    <property type="term" value="P:collagen fibril organization"/>
    <property type="evidence" value="ECO:0000318"/>
    <property type="project" value="GO_Central"/>
</dbReference>
<dbReference type="GO" id="GO:0018057">
    <property type="term" value="P:peptidyl-lysine oxidation"/>
    <property type="evidence" value="ECO:0000250"/>
    <property type="project" value="UniProtKB"/>
</dbReference>
<dbReference type="GO" id="GO:0035791">
    <property type="term" value="P:platelet-derived growth factor receptor-beta signaling pathway"/>
    <property type="evidence" value="ECO:0000318"/>
    <property type="project" value="GO_Central"/>
</dbReference>
<dbReference type="InterPro" id="IPR050912">
    <property type="entry name" value="LOX-like_protein"/>
</dbReference>
<dbReference type="InterPro" id="IPR001695">
    <property type="entry name" value="Lysyl_oxidase"/>
</dbReference>
<dbReference type="InterPro" id="IPR019828">
    <property type="entry name" value="Lysyl_oxidase_CS"/>
</dbReference>
<dbReference type="PANTHER" id="PTHR45817">
    <property type="entry name" value="LYSYL OXIDASE-LIKE-RELATED"/>
    <property type="match status" value="1"/>
</dbReference>
<dbReference type="PANTHER" id="PTHR45817:SF6">
    <property type="entry name" value="PROTEIN-LYSINE 6-OXIDASE"/>
    <property type="match status" value="1"/>
</dbReference>
<dbReference type="Pfam" id="PF01186">
    <property type="entry name" value="Lysyl_oxidase"/>
    <property type="match status" value="1"/>
</dbReference>
<dbReference type="PRINTS" id="PR00074">
    <property type="entry name" value="LYSYLOXIDASE"/>
</dbReference>
<dbReference type="PROSITE" id="PS00926">
    <property type="entry name" value="LYSYL_OXIDASE"/>
    <property type="match status" value="1"/>
</dbReference>
<keyword id="KW-0186">Copper</keyword>
<keyword id="KW-0903">Direct protein sequencing</keyword>
<keyword id="KW-1015">Disulfide bond</keyword>
<keyword id="KW-0325">Glycoprotein</keyword>
<keyword id="KW-0886">LTQ</keyword>
<keyword id="KW-0479">Metal-binding</keyword>
<keyword id="KW-0560">Oxidoreductase</keyword>
<keyword id="KW-1185">Reference proteome</keyword>
<keyword id="KW-0964">Secreted</keyword>
<keyword id="KW-0732">Signal</keyword>
<keyword id="KW-0765">Sulfation</keyword>
<keyword id="KW-0801">TPQ</keyword>
<proteinExistence type="evidence at protein level"/>
<feature type="signal peptide" evidence="2">
    <location>
        <begin position="1"/>
        <end position="20"/>
    </location>
</feature>
<feature type="propeptide" id="PRO_0000045436" description="Removed by BMP1" evidence="2">
    <location>
        <begin position="21"/>
        <end position="169"/>
    </location>
</feature>
<feature type="chain" id="PRO_0000045437" description="Protein-lysine 6-oxidase, long form" evidence="2">
    <location>
        <begin position="170"/>
        <end position="418"/>
    </location>
</feature>
<feature type="chain" id="PRO_0000447884" description="Protein-lysine 6-oxidase, short form" evidence="3">
    <location>
        <begin position="220"/>
        <end position="418"/>
    </location>
</feature>
<feature type="region of interest" description="Disordered" evidence="6">
    <location>
        <begin position="63"/>
        <end position="84"/>
    </location>
</feature>
<feature type="region of interest" description="Disordered" evidence="6">
    <location>
        <begin position="130"/>
        <end position="175"/>
    </location>
</feature>
<feature type="region of interest" description="Lysyl-oxidase like">
    <location>
        <begin position="214"/>
        <end position="418"/>
    </location>
</feature>
<feature type="compositionally biased region" description="Low complexity" evidence="6">
    <location>
        <begin position="72"/>
        <end position="84"/>
    </location>
</feature>
<feature type="compositionally biased region" description="Polar residues" evidence="6">
    <location>
        <begin position="140"/>
        <end position="157"/>
    </location>
</feature>
<feature type="binding site" evidence="5">
    <location>
        <position position="293"/>
    </location>
    <ligand>
        <name>Cu cation</name>
        <dbReference type="ChEBI" id="CHEBI:23378"/>
    </ligand>
</feature>
<feature type="binding site" evidence="5">
    <location>
        <position position="295"/>
    </location>
    <ligand>
        <name>Cu cation</name>
        <dbReference type="ChEBI" id="CHEBI:23378"/>
    </ligand>
</feature>
<feature type="binding site" evidence="5">
    <location>
        <position position="297"/>
    </location>
    <ligand>
        <name>Cu cation</name>
        <dbReference type="ChEBI" id="CHEBI:23378"/>
    </ligand>
</feature>
<feature type="site" description="Cleavage; by ADAMTS2 and ADAMTS14" evidence="3">
    <location>
        <begin position="219"/>
        <end position="220"/>
    </location>
</feature>
<feature type="modified residue" description="Sulfotyrosine" evidence="3">
    <location>
        <position position="188"/>
    </location>
</feature>
<feature type="modified residue" description="2',4',5'-topaquinone" evidence="9">
    <location>
        <position position="356"/>
    </location>
</feature>
<feature type="glycosylation site" description="N-linked (GlcNAc...) asparagine" evidence="5">
    <location>
        <position position="80"/>
    </location>
</feature>
<feature type="glycosylation site" description="N-linked (GlcNAc...) asparagine" evidence="5">
    <location>
        <position position="96"/>
    </location>
</feature>
<feature type="glycosylation site" description="N-linked (GlcNAc...) asparagine" evidence="5">
    <location>
        <position position="143"/>
    </location>
</feature>
<feature type="disulfide bond" evidence="7">
    <location>
        <begin position="239"/>
        <end position="245"/>
    </location>
</feature>
<feature type="disulfide bond" evidence="7">
    <location>
        <begin position="292"/>
        <end position="341"/>
    </location>
</feature>
<feature type="disulfide bond" evidence="7">
    <location>
        <begin position="325"/>
        <end position="331"/>
    </location>
</feature>
<feature type="disulfide bond" evidence="7">
    <location>
        <begin position="352"/>
        <end position="362"/>
    </location>
</feature>
<feature type="disulfide bond" evidence="7">
    <location>
        <begin position="399"/>
        <end position="413"/>
    </location>
</feature>
<feature type="cross-link" description="Lysine tyrosylquinone (Lys-Tyr)" evidence="9">
    <location>
        <begin position="321"/>
        <end position="356"/>
    </location>
</feature>
<feature type="sequence conflict" description="In Ref. 2; AA sequence." evidence="10" ref="2">
    <original>CT</original>
    <variation>QS</variation>
    <location>
        <begin position="413"/>
        <end position="414"/>
    </location>
</feature>
<evidence type="ECO:0000250" key="1"/>
<evidence type="ECO:0000250" key="2">
    <source>
        <dbReference type="UniProtKB" id="P16636"/>
    </source>
</evidence>
<evidence type="ECO:0000250" key="3">
    <source>
        <dbReference type="UniProtKB" id="P28300"/>
    </source>
</evidence>
<evidence type="ECO:0000250" key="4">
    <source>
        <dbReference type="UniProtKB" id="P28301"/>
    </source>
</evidence>
<evidence type="ECO:0000255" key="5"/>
<evidence type="ECO:0000256" key="6">
    <source>
        <dbReference type="SAM" id="MobiDB-lite"/>
    </source>
</evidence>
<evidence type="ECO:0000269" key="7">
    <source>
    </source>
</evidence>
<evidence type="ECO:0000269" key="8">
    <source>
    </source>
</evidence>
<evidence type="ECO:0000269" key="9">
    <source>
    </source>
</evidence>
<evidence type="ECO:0000305" key="10"/>